<organism>
    <name type="scientific">Coxiella burnetii (strain RSA 331 / Henzerling II)</name>
    <dbReference type="NCBI Taxonomy" id="360115"/>
    <lineage>
        <taxon>Bacteria</taxon>
        <taxon>Pseudomonadati</taxon>
        <taxon>Pseudomonadota</taxon>
        <taxon>Gammaproteobacteria</taxon>
        <taxon>Legionellales</taxon>
        <taxon>Coxiellaceae</taxon>
        <taxon>Coxiella</taxon>
    </lineage>
</organism>
<sequence length="443" mass="49707">MLPVIAIVGRPNVGKSTLFNYLTKSRAALVADVPGVTRDRQYGETTIDSQRLLLVDTGGLVDTENKEVAPLAETQVEQAIDESDCILFLVDAKAGLVPADEIIAERLRKKGKKIFLAVNKADRARAAVVQSDFYKLGFGEPYVIAAASGRGVKDLMTQVLENLPEEKEVIEKEVGIKIAMIGRPNVGKSTLINRLLGEERVIVYDQPGTTRDSIYIPFARNDENYTLIDTAGIRRRAKIQDYVEKFSMIKSLQAMHAADVVIFLLDARQGVTEQDLRLLNRIVEAGVSLIIAVNKWDGLNIEERDNVRNAIDRRMPFVDFARRYFISALHGTGVGKLFRAIQESYQSIQQELTTGQLTRALEKAVAEHEPPLVKGRRIRLRYAHLGARHPLTIVVHGKQTKSLPQSYSRYLANYFRKTFNFIGVPVHIKLKTDPNPYEGQEER</sequence>
<protein>
    <recommendedName>
        <fullName evidence="1">GTPase Der</fullName>
    </recommendedName>
    <alternativeName>
        <fullName evidence="1">GTP-binding protein EngA</fullName>
    </alternativeName>
</protein>
<accession>A9NDV6</accession>
<keyword id="KW-0342">GTP-binding</keyword>
<keyword id="KW-0547">Nucleotide-binding</keyword>
<keyword id="KW-0677">Repeat</keyword>
<keyword id="KW-0690">Ribosome biogenesis</keyword>
<feature type="chain" id="PRO_1000077656" description="GTPase Der">
    <location>
        <begin position="1"/>
        <end position="443"/>
    </location>
</feature>
<feature type="domain" description="EngA-type G 1">
    <location>
        <begin position="3"/>
        <end position="167"/>
    </location>
</feature>
<feature type="domain" description="EngA-type G 2">
    <location>
        <begin position="176"/>
        <end position="349"/>
    </location>
</feature>
<feature type="domain" description="KH-like" evidence="1">
    <location>
        <begin position="350"/>
        <end position="434"/>
    </location>
</feature>
<feature type="binding site" evidence="1">
    <location>
        <begin position="9"/>
        <end position="16"/>
    </location>
    <ligand>
        <name>GTP</name>
        <dbReference type="ChEBI" id="CHEBI:37565"/>
        <label>1</label>
    </ligand>
</feature>
<feature type="binding site" evidence="1">
    <location>
        <begin position="56"/>
        <end position="60"/>
    </location>
    <ligand>
        <name>GTP</name>
        <dbReference type="ChEBI" id="CHEBI:37565"/>
        <label>1</label>
    </ligand>
</feature>
<feature type="binding site" evidence="1">
    <location>
        <begin position="119"/>
        <end position="122"/>
    </location>
    <ligand>
        <name>GTP</name>
        <dbReference type="ChEBI" id="CHEBI:37565"/>
        <label>1</label>
    </ligand>
</feature>
<feature type="binding site" evidence="1">
    <location>
        <begin position="182"/>
        <end position="189"/>
    </location>
    <ligand>
        <name>GTP</name>
        <dbReference type="ChEBI" id="CHEBI:37565"/>
        <label>2</label>
    </ligand>
</feature>
<feature type="binding site" evidence="1">
    <location>
        <begin position="229"/>
        <end position="233"/>
    </location>
    <ligand>
        <name>GTP</name>
        <dbReference type="ChEBI" id="CHEBI:37565"/>
        <label>2</label>
    </ligand>
</feature>
<feature type="binding site" evidence="1">
    <location>
        <begin position="294"/>
        <end position="297"/>
    </location>
    <ligand>
        <name>GTP</name>
        <dbReference type="ChEBI" id="CHEBI:37565"/>
        <label>2</label>
    </ligand>
</feature>
<proteinExistence type="inferred from homology"/>
<reference key="1">
    <citation type="submission" date="2007-11" db="EMBL/GenBank/DDBJ databases">
        <title>Genome sequencing of phylogenetically and phenotypically diverse Coxiella burnetii isolates.</title>
        <authorList>
            <person name="Seshadri R."/>
            <person name="Samuel J.E."/>
        </authorList>
    </citation>
    <scope>NUCLEOTIDE SEQUENCE [LARGE SCALE GENOMIC DNA]</scope>
    <source>
        <strain>RSA 331 / Henzerling II</strain>
    </source>
</reference>
<dbReference type="EMBL" id="CP000890">
    <property type="protein sequence ID" value="ABX78377.1"/>
    <property type="molecule type" value="Genomic_DNA"/>
</dbReference>
<dbReference type="RefSeq" id="WP_005770802.1">
    <property type="nucleotide sequence ID" value="NC_010117.1"/>
</dbReference>
<dbReference type="SMR" id="A9NDV6"/>
<dbReference type="KEGG" id="cbs:COXBURSA331_A1390"/>
<dbReference type="HOGENOM" id="CLU_016077_6_2_6"/>
<dbReference type="GO" id="GO:0005525">
    <property type="term" value="F:GTP binding"/>
    <property type="evidence" value="ECO:0007669"/>
    <property type="project" value="UniProtKB-UniRule"/>
</dbReference>
<dbReference type="GO" id="GO:0043022">
    <property type="term" value="F:ribosome binding"/>
    <property type="evidence" value="ECO:0007669"/>
    <property type="project" value="TreeGrafter"/>
</dbReference>
<dbReference type="GO" id="GO:0042254">
    <property type="term" value="P:ribosome biogenesis"/>
    <property type="evidence" value="ECO:0007669"/>
    <property type="project" value="UniProtKB-KW"/>
</dbReference>
<dbReference type="CDD" id="cd01894">
    <property type="entry name" value="EngA1"/>
    <property type="match status" value="1"/>
</dbReference>
<dbReference type="CDD" id="cd01895">
    <property type="entry name" value="EngA2"/>
    <property type="match status" value="1"/>
</dbReference>
<dbReference type="FunFam" id="3.30.300.20:FF:000004">
    <property type="entry name" value="GTPase Der"/>
    <property type="match status" value="1"/>
</dbReference>
<dbReference type="FunFam" id="3.40.50.300:FF:000040">
    <property type="entry name" value="GTPase Der"/>
    <property type="match status" value="1"/>
</dbReference>
<dbReference type="FunFam" id="3.40.50.300:FF:000057">
    <property type="entry name" value="GTPase Der"/>
    <property type="match status" value="1"/>
</dbReference>
<dbReference type="Gene3D" id="3.30.300.20">
    <property type="match status" value="1"/>
</dbReference>
<dbReference type="Gene3D" id="3.40.50.300">
    <property type="entry name" value="P-loop containing nucleotide triphosphate hydrolases"/>
    <property type="match status" value="2"/>
</dbReference>
<dbReference type="HAMAP" id="MF_00195">
    <property type="entry name" value="GTPase_Der"/>
    <property type="match status" value="1"/>
</dbReference>
<dbReference type="InterPro" id="IPR031166">
    <property type="entry name" value="G_ENGA"/>
</dbReference>
<dbReference type="InterPro" id="IPR006073">
    <property type="entry name" value="GTP-bd"/>
</dbReference>
<dbReference type="InterPro" id="IPR016484">
    <property type="entry name" value="GTPase_Der"/>
</dbReference>
<dbReference type="InterPro" id="IPR032859">
    <property type="entry name" value="KH_dom-like"/>
</dbReference>
<dbReference type="InterPro" id="IPR015946">
    <property type="entry name" value="KH_dom-like_a/b"/>
</dbReference>
<dbReference type="InterPro" id="IPR027417">
    <property type="entry name" value="P-loop_NTPase"/>
</dbReference>
<dbReference type="InterPro" id="IPR005225">
    <property type="entry name" value="Small_GTP-bd"/>
</dbReference>
<dbReference type="NCBIfam" id="TIGR03594">
    <property type="entry name" value="GTPase_EngA"/>
    <property type="match status" value="1"/>
</dbReference>
<dbReference type="NCBIfam" id="TIGR00231">
    <property type="entry name" value="small_GTP"/>
    <property type="match status" value="2"/>
</dbReference>
<dbReference type="PANTHER" id="PTHR43834">
    <property type="entry name" value="GTPASE DER"/>
    <property type="match status" value="1"/>
</dbReference>
<dbReference type="PANTHER" id="PTHR43834:SF6">
    <property type="entry name" value="GTPASE DER"/>
    <property type="match status" value="1"/>
</dbReference>
<dbReference type="Pfam" id="PF14714">
    <property type="entry name" value="KH_dom-like"/>
    <property type="match status" value="1"/>
</dbReference>
<dbReference type="Pfam" id="PF01926">
    <property type="entry name" value="MMR_HSR1"/>
    <property type="match status" value="2"/>
</dbReference>
<dbReference type="PIRSF" id="PIRSF006485">
    <property type="entry name" value="GTP-binding_EngA"/>
    <property type="match status" value="1"/>
</dbReference>
<dbReference type="PRINTS" id="PR00326">
    <property type="entry name" value="GTP1OBG"/>
</dbReference>
<dbReference type="SUPFAM" id="SSF52540">
    <property type="entry name" value="P-loop containing nucleoside triphosphate hydrolases"/>
    <property type="match status" value="2"/>
</dbReference>
<dbReference type="PROSITE" id="PS51712">
    <property type="entry name" value="G_ENGA"/>
    <property type="match status" value="2"/>
</dbReference>
<evidence type="ECO:0000255" key="1">
    <source>
        <dbReference type="HAMAP-Rule" id="MF_00195"/>
    </source>
</evidence>
<comment type="function">
    <text evidence="1">GTPase that plays an essential role in the late steps of ribosome biogenesis.</text>
</comment>
<comment type="subunit">
    <text evidence="1">Associates with the 50S ribosomal subunit.</text>
</comment>
<comment type="similarity">
    <text evidence="1">Belongs to the TRAFAC class TrmE-Era-EngA-EngB-Septin-like GTPase superfamily. EngA (Der) GTPase family.</text>
</comment>
<gene>
    <name evidence="1" type="primary">der</name>
    <name type="synonym">engA</name>
    <name type="ordered locus">COXBURSA331_A1390</name>
</gene>
<name>DER_COXBR</name>